<dbReference type="EMBL" id="AY563036">
    <property type="protein sequence ID" value="AAS67003.1"/>
    <property type="molecule type" value="mRNA"/>
</dbReference>
<dbReference type="PIR" id="A61031">
    <property type="entry name" value="A61031"/>
</dbReference>
<dbReference type="RefSeq" id="NP_001003364.1">
    <property type="nucleotide sequence ID" value="NM_001003364.1"/>
</dbReference>
<dbReference type="SMR" id="P38400"/>
<dbReference type="FunCoup" id="P38400">
    <property type="interactions" value="3019"/>
</dbReference>
<dbReference type="STRING" id="9615.ENSCAFP00000033576"/>
<dbReference type="SwissPalm" id="P38400"/>
<dbReference type="PaxDb" id="9612-ENSCAFP00000033576"/>
<dbReference type="Ensembl" id="ENSCAFT00000037927.4">
    <property type="protein sequence ID" value="ENSCAFP00000033576.2"/>
    <property type="gene ID" value="ENSCAFG00000010740.5"/>
</dbReference>
<dbReference type="Ensembl" id="ENSCAFT00030022602.1">
    <property type="protein sequence ID" value="ENSCAFP00030019719.1"/>
    <property type="gene ID" value="ENSCAFG00030012013.1"/>
</dbReference>
<dbReference type="Ensembl" id="ENSCAFT00040029611.1">
    <property type="protein sequence ID" value="ENSCAFP00040025722.1"/>
    <property type="gene ID" value="ENSCAFG00040016016.1"/>
</dbReference>
<dbReference type="Ensembl" id="ENSCAFT00845039975.1">
    <property type="protein sequence ID" value="ENSCAFP00845031303.1"/>
    <property type="gene ID" value="ENSCAFG00845022609.1"/>
</dbReference>
<dbReference type="GeneID" id="442957"/>
<dbReference type="KEGG" id="cfa:442957"/>
<dbReference type="CTD" id="2771"/>
<dbReference type="VEuPathDB" id="HostDB:ENSCAFG00845022609"/>
<dbReference type="VGNC" id="VGNC:41302">
    <property type="gene designation" value="GNAI2"/>
</dbReference>
<dbReference type="eggNOG" id="KOG0082">
    <property type="taxonomic scope" value="Eukaryota"/>
</dbReference>
<dbReference type="GeneTree" id="ENSGT00940000155125"/>
<dbReference type="HOGENOM" id="CLU_014184_6_0_1"/>
<dbReference type="InParanoid" id="P38400"/>
<dbReference type="OMA" id="CPITICF"/>
<dbReference type="OrthoDB" id="5817230at2759"/>
<dbReference type="TreeFam" id="TF300673"/>
<dbReference type="Reactome" id="R-CFA-170670">
    <property type="pathway name" value="Adenylate cyclase inhibitory pathway"/>
</dbReference>
<dbReference type="Reactome" id="R-CFA-392170">
    <property type="pathway name" value="ADP signalling through P2Y purinoceptor 12"/>
</dbReference>
<dbReference type="Reactome" id="R-CFA-400042">
    <property type="pathway name" value="Adrenaline,noradrenaline inhibits insulin secretion"/>
</dbReference>
<dbReference type="Reactome" id="R-CFA-418594">
    <property type="pathway name" value="G alpha (i) signalling events"/>
</dbReference>
<dbReference type="Reactome" id="R-CFA-9009391">
    <property type="pathway name" value="Extra-nuclear estrogen signaling"/>
</dbReference>
<dbReference type="Proteomes" id="UP000002254">
    <property type="component" value="Chromosome 20"/>
</dbReference>
<dbReference type="Proteomes" id="UP000694429">
    <property type="component" value="Chromosome 20"/>
</dbReference>
<dbReference type="Proteomes" id="UP000694542">
    <property type="component" value="Chromosome 20"/>
</dbReference>
<dbReference type="Proteomes" id="UP000805418">
    <property type="component" value="Chromosome 20"/>
</dbReference>
<dbReference type="Bgee" id="ENSCAFG00000010740">
    <property type="expression patterns" value="Expressed in granulocyte and 46 other cell types or tissues"/>
</dbReference>
<dbReference type="GO" id="GO:0044297">
    <property type="term" value="C:cell body"/>
    <property type="evidence" value="ECO:0007669"/>
    <property type="project" value="Ensembl"/>
</dbReference>
<dbReference type="GO" id="GO:0005813">
    <property type="term" value="C:centrosome"/>
    <property type="evidence" value="ECO:0000250"/>
    <property type="project" value="UniProtKB"/>
</dbReference>
<dbReference type="GO" id="GO:0036064">
    <property type="term" value="C:ciliary basal body"/>
    <property type="evidence" value="ECO:0007669"/>
    <property type="project" value="Ensembl"/>
</dbReference>
<dbReference type="GO" id="GO:0005737">
    <property type="term" value="C:cytoplasm"/>
    <property type="evidence" value="ECO:0000250"/>
    <property type="project" value="UniProtKB"/>
</dbReference>
<dbReference type="GO" id="GO:0005829">
    <property type="term" value="C:cytosol"/>
    <property type="evidence" value="ECO:0007669"/>
    <property type="project" value="Ensembl"/>
</dbReference>
<dbReference type="GO" id="GO:0030425">
    <property type="term" value="C:dendrite"/>
    <property type="evidence" value="ECO:0007669"/>
    <property type="project" value="Ensembl"/>
</dbReference>
<dbReference type="GO" id="GO:0070382">
    <property type="term" value="C:exocytic vesicle"/>
    <property type="evidence" value="ECO:0000314"/>
    <property type="project" value="CAFA"/>
</dbReference>
<dbReference type="GO" id="GO:0005834">
    <property type="term" value="C:heterotrimeric G-protein complex"/>
    <property type="evidence" value="ECO:0000318"/>
    <property type="project" value="GO_Central"/>
</dbReference>
<dbReference type="GO" id="GO:0098686">
    <property type="term" value="C:hippocampal mossy fiber to CA3 synapse"/>
    <property type="evidence" value="ECO:0007669"/>
    <property type="project" value="Ensembl"/>
</dbReference>
<dbReference type="GO" id="GO:0030496">
    <property type="term" value="C:midbody"/>
    <property type="evidence" value="ECO:0000250"/>
    <property type="project" value="UniProtKB"/>
</dbReference>
<dbReference type="GO" id="GO:0098992">
    <property type="term" value="C:neuronal dense core vesicle"/>
    <property type="evidence" value="ECO:0007669"/>
    <property type="project" value="Ensembl"/>
</dbReference>
<dbReference type="GO" id="GO:0005654">
    <property type="term" value="C:nucleoplasm"/>
    <property type="evidence" value="ECO:0007669"/>
    <property type="project" value="Ensembl"/>
</dbReference>
<dbReference type="GO" id="GO:0005886">
    <property type="term" value="C:plasma membrane"/>
    <property type="evidence" value="ECO:0000250"/>
    <property type="project" value="UniProtKB"/>
</dbReference>
<dbReference type="GO" id="GO:0001664">
    <property type="term" value="F:G protein-coupled receptor binding"/>
    <property type="evidence" value="ECO:0000318"/>
    <property type="project" value="GO_Central"/>
</dbReference>
<dbReference type="GO" id="GO:0031683">
    <property type="term" value="F:G-protein beta/gamma-subunit complex binding"/>
    <property type="evidence" value="ECO:0000318"/>
    <property type="project" value="GO_Central"/>
</dbReference>
<dbReference type="GO" id="GO:0005525">
    <property type="term" value="F:GTP binding"/>
    <property type="evidence" value="ECO:0007669"/>
    <property type="project" value="UniProtKB-KW"/>
</dbReference>
<dbReference type="GO" id="GO:0003924">
    <property type="term" value="F:GTPase activity"/>
    <property type="evidence" value="ECO:0000318"/>
    <property type="project" value="GO_Central"/>
</dbReference>
<dbReference type="GO" id="GO:0046872">
    <property type="term" value="F:metal ion binding"/>
    <property type="evidence" value="ECO:0007669"/>
    <property type="project" value="UniProtKB-KW"/>
</dbReference>
<dbReference type="GO" id="GO:0007193">
    <property type="term" value="P:adenylate cyclase-inhibiting G protein-coupled receptor signaling pathway"/>
    <property type="evidence" value="ECO:0000318"/>
    <property type="project" value="GO_Central"/>
</dbReference>
<dbReference type="GO" id="GO:0051301">
    <property type="term" value="P:cell division"/>
    <property type="evidence" value="ECO:0000250"/>
    <property type="project" value="UniProtKB"/>
</dbReference>
<dbReference type="GO" id="GO:0008283">
    <property type="term" value="P:cell population proliferation"/>
    <property type="evidence" value="ECO:0007669"/>
    <property type="project" value="Ensembl"/>
</dbReference>
<dbReference type="GO" id="GO:0007213">
    <property type="term" value="P:G protein-coupled acetylcholine receptor signaling pathway"/>
    <property type="evidence" value="ECO:0007669"/>
    <property type="project" value="Ensembl"/>
</dbReference>
<dbReference type="GO" id="GO:0001973">
    <property type="term" value="P:G protein-coupled adenosine receptor signaling pathway"/>
    <property type="evidence" value="ECO:0000318"/>
    <property type="project" value="GO_Central"/>
</dbReference>
<dbReference type="GO" id="GO:0007214">
    <property type="term" value="P:gamma-aminobutyric acid signaling pathway"/>
    <property type="evidence" value="ECO:0000318"/>
    <property type="project" value="GO_Central"/>
</dbReference>
<dbReference type="GO" id="GO:0050804">
    <property type="term" value="P:modulation of chemical synaptic transmission"/>
    <property type="evidence" value="ECO:0007669"/>
    <property type="project" value="Ensembl"/>
</dbReference>
<dbReference type="GO" id="GO:0008284">
    <property type="term" value="P:positive regulation of cell population proliferation"/>
    <property type="evidence" value="ECO:0007669"/>
    <property type="project" value="Ensembl"/>
</dbReference>
<dbReference type="CDD" id="cd00066">
    <property type="entry name" value="G-alpha"/>
    <property type="match status" value="1"/>
</dbReference>
<dbReference type="FunFam" id="1.10.400.10:FF:000001">
    <property type="entry name" value="Guanine nucleotide-binding protein G(I) subunit alpha"/>
    <property type="match status" value="1"/>
</dbReference>
<dbReference type="FunFam" id="3.40.50.300:FF:002487">
    <property type="entry name" value="Guanine nucleotide-binding protein G(i) subunit alpha-1"/>
    <property type="match status" value="1"/>
</dbReference>
<dbReference type="FunFam" id="3.40.50.300:FF:003559">
    <property type="entry name" value="Guanine nucleotide-binding protein G(i) subunit alpha-1"/>
    <property type="match status" value="1"/>
</dbReference>
<dbReference type="Gene3D" id="1.10.400.10">
    <property type="entry name" value="GI Alpha 1, domain 2-like"/>
    <property type="match status" value="1"/>
</dbReference>
<dbReference type="Gene3D" id="3.40.50.300">
    <property type="entry name" value="P-loop containing nucleotide triphosphate hydrolases"/>
    <property type="match status" value="1"/>
</dbReference>
<dbReference type="InterPro" id="IPR001408">
    <property type="entry name" value="Gprotein_alpha_I"/>
</dbReference>
<dbReference type="InterPro" id="IPR001019">
    <property type="entry name" value="Gprotein_alpha_su"/>
</dbReference>
<dbReference type="InterPro" id="IPR011025">
    <property type="entry name" value="GproteinA_insert"/>
</dbReference>
<dbReference type="InterPro" id="IPR027417">
    <property type="entry name" value="P-loop_NTPase"/>
</dbReference>
<dbReference type="PANTHER" id="PTHR10218">
    <property type="entry name" value="GTP-BINDING PROTEIN ALPHA SUBUNIT"/>
    <property type="match status" value="1"/>
</dbReference>
<dbReference type="PANTHER" id="PTHR10218:SF73">
    <property type="entry name" value="GUANINE NUCLEOTIDE-BINDING PROTEIN G(I) SUBUNIT ALPHA-2"/>
    <property type="match status" value="1"/>
</dbReference>
<dbReference type="Pfam" id="PF00503">
    <property type="entry name" value="G-alpha"/>
    <property type="match status" value="1"/>
</dbReference>
<dbReference type="PRINTS" id="PR00318">
    <property type="entry name" value="GPROTEINA"/>
</dbReference>
<dbReference type="PRINTS" id="PR00441">
    <property type="entry name" value="GPROTEINAI"/>
</dbReference>
<dbReference type="SMART" id="SM00275">
    <property type="entry name" value="G_alpha"/>
    <property type="match status" value="1"/>
</dbReference>
<dbReference type="SUPFAM" id="SSF52540">
    <property type="entry name" value="P-loop containing nucleoside triphosphate hydrolases"/>
    <property type="match status" value="1"/>
</dbReference>
<dbReference type="SUPFAM" id="SSF47895">
    <property type="entry name" value="Transducin (alpha subunit), insertion domain"/>
    <property type="match status" value="1"/>
</dbReference>
<dbReference type="PROSITE" id="PS51882">
    <property type="entry name" value="G_ALPHA"/>
    <property type="match status" value="1"/>
</dbReference>
<sequence>MGCTVSAEDKAAAERSKMIDKNLREDGEKAAREVKLLLLGAGESGKSTIVKQMKIIHEDGYSEEECRQYRAVVYSNTIQSIMAIVKAMGNLQIDFDDPSRADDARQLFALSCTAEEQGVLPEDLSCVIRRLWADNGVQACFGRSREYQLNDSAAYYLNDLERIAQSDYIPTQQDVLRTRVKTTGIVETHFTFKDLHFKMFDVGGQRSERKKWIHCFEGVTAIIFCVALSAYDLVLAEDEEMNRMHESMKLFDSICNNKWFTDTSIILFLNKKDLFEEKITHSPLTICFPEYTGANKYEEAASYIQSKFEDLNKRKDTKEIYTHFTCATDTKNVQFVFDAVTDVIIKNNLKDCGLF</sequence>
<evidence type="ECO:0000250" key="1"/>
<evidence type="ECO:0000250" key="2">
    <source>
        <dbReference type="UniProtKB" id="P04897"/>
    </source>
</evidence>
<evidence type="ECO:0000250" key="3">
    <source>
        <dbReference type="UniProtKB" id="P04899"/>
    </source>
</evidence>
<evidence type="ECO:0000255" key="4">
    <source>
        <dbReference type="PROSITE-ProRule" id="PRU01230"/>
    </source>
</evidence>
<evidence type="ECO:0000305" key="5"/>
<name>GNAI2_CANLF</name>
<keyword id="KW-0131">Cell cycle</keyword>
<keyword id="KW-0132">Cell division</keyword>
<keyword id="KW-1003">Cell membrane</keyword>
<keyword id="KW-0963">Cytoplasm</keyword>
<keyword id="KW-0206">Cytoskeleton</keyword>
<keyword id="KW-0342">GTP-binding</keyword>
<keyword id="KW-0449">Lipoprotein</keyword>
<keyword id="KW-0460">Magnesium</keyword>
<keyword id="KW-0472">Membrane</keyword>
<keyword id="KW-0479">Metal-binding</keyword>
<keyword id="KW-0519">Myristate</keyword>
<keyword id="KW-0547">Nucleotide-binding</keyword>
<keyword id="KW-0564">Palmitate</keyword>
<keyword id="KW-1185">Reference proteome</keyword>
<keyword id="KW-0807">Transducer</keyword>
<proteinExistence type="evidence at transcript level"/>
<reference key="1">
    <citation type="journal article" date="1989" name="Circ. Res.">
        <title>Tissue- and species-specific expression of inhibitory guanine nucleotide-binding proteins. Cloning of a full-length complementary DNA from canine heart.</title>
        <authorList>
            <person name="Holmer S.R."/>
            <person name="Stevens S."/>
            <person name="Homcy C.J."/>
        </authorList>
    </citation>
    <scope>NUCLEOTIDE SEQUENCE [MRNA]</scope>
</reference>
<reference key="2">
    <citation type="submission" date="2004-03" db="EMBL/GenBank/DDBJ databases">
        <title>Guanine nucleotide-binding regulatory protein, alpha inhibitory subunit mRNA.</title>
        <authorList>
            <person name="Boudreaux M.K."/>
        </authorList>
    </citation>
    <scope>NUCLEOTIDE SEQUENCE [MRNA]</scope>
</reference>
<feature type="initiator methionine" description="Removed" evidence="3">
    <location>
        <position position="1"/>
    </location>
</feature>
<feature type="chain" id="PRO_0000203677" description="Guanine nucleotide-binding protein G(i) subunit alpha-2">
    <location>
        <begin position="2"/>
        <end position="355"/>
    </location>
</feature>
<feature type="domain" description="G-alpha" evidence="4">
    <location>
        <begin position="32"/>
        <end position="355"/>
    </location>
</feature>
<feature type="region of interest" description="G1 motif" evidence="4">
    <location>
        <begin position="35"/>
        <end position="48"/>
    </location>
</feature>
<feature type="region of interest" description="G2 motif" evidence="4">
    <location>
        <begin position="174"/>
        <end position="182"/>
    </location>
</feature>
<feature type="region of interest" description="G3 motif" evidence="4">
    <location>
        <begin position="197"/>
        <end position="206"/>
    </location>
</feature>
<feature type="region of interest" description="G4 motif" evidence="4">
    <location>
        <begin position="266"/>
        <end position="273"/>
    </location>
</feature>
<feature type="region of interest" description="G5 motif" evidence="4">
    <location>
        <begin position="325"/>
        <end position="330"/>
    </location>
</feature>
<feature type="binding site" evidence="1">
    <location>
        <begin position="40"/>
        <end position="47"/>
    </location>
    <ligand>
        <name>GTP</name>
        <dbReference type="ChEBI" id="CHEBI:37565"/>
    </ligand>
</feature>
<feature type="binding site" evidence="1">
    <location>
        <position position="47"/>
    </location>
    <ligand>
        <name>Mg(2+)</name>
        <dbReference type="ChEBI" id="CHEBI:18420"/>
    </ligand>
</feature>
<feature type="binding site" evidence="1">
    <location>
        <begin position="176"/>
        <end position="182"/>
    </location>
    <ligand>
        <name>GTP</name>
        <dbReference type="ChEBI" id="CHEBI:37565"/>
    </ligand>
</feature>
<feature type="binding site" evidence="1">
    <location>
        <position position="182"/>
    </location>
    <ligand>
        <name>Mg(2+)</name>
        <dbReference type="ChEBI" id="CHEBI:18420"/>
    </ligand>
</feature>
<feature type="binding site" evidence="1">
    <location>
        <begin position="201"/>
        <end position="205"/>
    </location>
    <ligand>
        <name>GTP</name>
        <dbReference type="ChEBI" id="CHEBI:37565"/>
    </ligand>
</feature>
<feature type="binding site" evidence="1">
    <location>
        <begin position="270"/>
        <end position="273"/>
    </location>
    <ligand>
        <name>GTP</name>
        <dbReference type="ChEBI" id="CHEBI:37565"/>
    </ligand>
</feature>
<feature type="binding site" evidence="1">
    <location>
        <position position="327"/>
    </location>
    <ligand>
        <name>GTP</name>
        <dbReference type="ChEBI" id="CHEBI:37565"/>
    </ligand>
</feature>
<feature type="lipid moiety-binding region" description="N-myristoyl glycine" evidence="3">
    <location>
        <position position="2"/>
    </location>
</feature>
<feature type="lipid moiety-binding region" description="S-palmitoyl cysteine" evidence="1">
    <location>
        <position position="3"/>
    </location>
</feature>
<gene>
    <name type="primary">GNAI2</name>
</gene>
<accession>P38400</accession>
<protein>
    <recommendedName>
        <fullName>Guanine nucleotide-binding protein G(i) subunit alpha-2</fullName>
    </recommendedName>
    <alternativeName>
        <fullName>Adenylate cyclase-inhibiting G alpha protein</fullName>
    </alternativeName>
</protein>
<comment type="function">
    <text evidence="1">Guanine nucleotide-binding proteins (G proteins) are involved as modulators or transducers in various transmembrane signaling systems. The G(i) proteins are involved in hormonal regulation of adenylate cyclase: they inhibit the cyclase in response to beta-adrenergic stimuli. May play a role in cell division (By similarity).</text>
</comment>
<comment type="subunit">
    <text evidence="2 3">G proteins are composed of 3 units; alpha, beta and gamma. The alpha chain contains the guanine nucleotide binding site. In this context, interacts with GNB2 (By similarity). Interacts with UNC5B (By similarity). Interacts with GPSM1 (By similarity). Interacts with RGS12 and RGS14 (By similarity). Interacts (inactive GDP-bound form) with NUCB1 (via GBA motif); the interaction leads to activation of GNAI3 (By similarity). Interacts (inactive GDP-bound form) with CCDC88C/DAPLE (via GBA motif) (By similarity). Interacts (inactive GDP-bound form) with CCDC8A/GIV (via GBA motif) (By similarity). Interacts with CXCR1 and CXCR2 (By similarity).</text>
</comment>
<comment type="subcellular location">
    <subcellularLocation>
        <location evidence="1">Cytoplasm</location>
    </subcellularLocation>
    <subcellularLocation>
        <location evidence="1">Cytoplasm</location>
        <location evidence="1">Cytoskeleton</location>
        <location evidence="1">Microtubule organizing center</location>
        <location evidence="1">Centrosome</location>
    </subcellularLocation>
    <subcellularLocation>
        <location evidence="1">Cell membrane</location>
    </subcellularLocation>
    <subcellularLocation>
        <location evidence="3">Membrane</location>
        <topology evidence="3">Lipid-anchor</topology>
    </subcellularLocation>
    <text evidence="1">Localizes in the centrosomes of interphase and mitotic cells. Detected at the cleavage furrow and/or the midbody (By similarity).</text>
</comment>
<comment type="similarity">
    <text evidence="5">Belongs to the G-alpha family. G(i/o/t/z) subfamily.</text>
</comment>
<organism>
    <name type="scientific">Canis lupus familiaris</name>
    <name type="common">Dog</name>
    <name type="synonym">Canis familiaris</name>
    <dbReference type="NCBI Taxonomy" id="9615"/>
    <lineage>
        <taxon>Eukaryota</taxon>
        <taxon>Metazoa</taxon>
        <taxon>Chordata</taxon>
        <taxon>Craniata</taxon>
        <taxon>Vertebrata</taxon>
        <taxon>Euteleostomi</taxon>
        <taxon>Mammalia</taxon>
        <taxon>Eutheria</taxon>
        <taxon>Laurasiatheria</taxon>
        <taxon>Carnivora</taxon>
        <taxon>Caniformia</taxon>
        <taxon>Canidae</taxon>
        <taxon>Canis</taxon>
    </lineage>
</organism>